<sequence>MAASTLYKSCLLQPKSGSTTRRLNPSLVNPLTNPTRVSVLGKSRRDVFAKASIEMAESNSIPSVVVNSSKQHGPIIVIDNYDSFTYNLCQYMGELGCHFEVYRNDELTVEELKKKNPRGVLISPGPGTPQDSGISLQTVLELGPLVPLFGVCMGLQCIGEAFGGKIVRSPFGVMHGKSSMVHYDEKGEEGLFSGLSNPFIVGRYHSLVIEKDTFPSDELEVTAWTEDGLVMAARHRKYKHIQGVQFHPESIITTEGKTIVRNFIKIVEKKESEKLT</sequence>
<protein>
    <recommendedName>
        <fullName>Anthranilate synthase beta subunit 1, chloroplastic</fullName>
        <ecNumber>4.1.3.27</ecNumber>
    </recommendedName>
    <alternativeName>
        <fullName>Anthranilate synthase component 2-1</fullName>
    </alternativeName>
    <alternativeName>
        <fullName>Anthranilate synthase, glutamine amidotransferase component 2-1</fullName>
    </alternativeName>
    <alternativeName>
        <fullName>Protein TRYPTOPHAN BIOSYNTHESIS 4</fullName>
    </alternativeName>
    <alternativeName>
        <fullName>Protein WEAK ETHYLENE INSENSITIVE 7</fullName>
    </alternativeName>
</protein>
<comment type="function">
    <text evidence="4">Part of a heterotetrameric complex that catalyzes the two-step biosynthesis of anthranilate, an intermediate in the biosynthesis of L-tryptophan. In the first step, the glutamine-binding beta subunit of anthranilate synthase (AS) provides the glutamine amidotransferase activity which generates ammonia as a substrate that, along with chorismate, is used in the second step, catalyzed by the large alpha subunit of AS to produce anthranilate. Plays an important regulatory role in auxin production via the tryptophan-dependent biosynthetic pathway.</text>
</comment>
<comment type="catalytic activity">
    <reaction>
        <text>chorismate + L-glutamine = anthranilate + pyruvate + L-glutamate + H(+)</text>
        <dbReference type="Rhea" id="RHEA:21732"/>
        <dbReference type="ChEBI" id="CHEBI:15361"/>
        <dbReference type="ChEBI" id="CHEBI:15378"/>
        <dbReference type="ChEBI" id="CHEBI:16567"/>
        <dbReference type="ChEBI" id="CHEBI:29748"/>
        <dbReference type="ChEBI" id="CHEBI:29985"/>
        <dbReference type="ChEBI" id="CHEBI:58359"/>
        <dbReference type="EC" id="4.1.3.27"/>
    </reaction>
</comment>
<comment type="pathway">
    <text>Amino-acid biosynthesis; L-tryptophan biosynthesis; L-tryptophan from chorismate: step 1/5.</text>
</comment>
<comment type="subunit">
    <text evidence="1">Heterotetramer consisting of two non-identical subunits: a beta subunit and a large alpha subunit.</text>
</comment>
<comment type="subcellular location">
    <subcellularLocation>
        <location evidence="7">Plastid</location>
        <location evidence="7">Chloroplast</location>
    </subcellularLocation>
</comment>
<comment type="alternative products">
    <event type="alternative splicing"/>
    <isoform>
        <id>Q42565-1</id>
        <name>1</name>
        <sequence type="displayed"/>
    </isoform>
    <text>A number of isoforms are produced. According to EST sequences.</text>
</comment>
<comment type="tissue specificity">
    <text evidence="5">Expressed in the central cylinder of mature primary root zones, including pericycle and early lateral root primordia, and vasculature of cotyledons.</text>
</comment>
<comment type="induction">
    <text evidence="4 6">By ethylene and the bacterial pathogen P.syringae.</text>
</comment>
<comment type="disruption phenotype">
    <text evidence="4 6">No visible phenotype under normal growth conditions, but mutant plants are insensitive to inhibition of root elongation by ethylene.</text>
</comment>
<proteinExistence type="evidence at protein level"/>
<dbReference type="EC" id="4.1.3.27"/>
<dbReference type="EMBL" id="L22585">
    <property type="protein sequence ID" value="AAA32742.1"/>
    <property type="molecule type" value="mRNA"/>
</dbReference>
<dbReference type="EMBL" id="AC079374">
    <property type="protein sequence ID" value="AAG28813.1"/>
    <property type="molecule type" value="Genomic_DNA"/>
</dbReference>
<dbReference type="EMBL" id="CP002684">
    <property type="protein sequence ID" value="AEE30589.1"/>
    <property type="molecule type" value="Genomic_DNA"/>
</dbReference>
<dbReference type="EMBL" id="AY099834">
    <property type="protein sequence ID" value="AAM20685.1"/>
    <property type="molecule type" value="mRNA"/>
</dbReference>
<dbReference type="EMBL" id="BT006303">
    <property type="protein sequence ID" value="AAP13411.1"/>
    <property type="molecule type" value="mRNA"/>
</dbReference>
<dbReference type="EMBL" id="AK226500">
    <property type="protein sequence ID" value="BAE98642.1"/>
    <property type="molecule type" value="mRNA"/>
</dbReference>
<dbReference type="PIR" id="JQ2340">
    <property type="entry name" value="JQ2340"/>
</dbReference>
<dbReference type="RefSeq" id="NP_173893.1">
    <molecule id="Q42565-1"/>
    <property type="nucleotide sequence ID" value="NM_102331.3"/>
</dbReference>
<dbReference type="SMR" id="Q42565"/>
<dbReference type="BioGRID" id="24340">
    <property type="interactions" value="1"/>
</dbReference>
<dbReference type="FunCoup" id="Q42565">
    <property type="interactions" value="413"/>
</dbReference>
<dbReference type="IntAct" id="Q42565">
    <property type="interactions" value="1"/>
</dbReference>
<dbReference type="STRING" id="3702.Q42565"/>
<dbReference type="MEROPS" id="C26.A09"/>
<dbReference type="PaxDb" id="3702-AT1G25220.2"/>
<dbReference type="ProteomicsDB" id="246500">
    <molecule id="Q42565-1"/>
</dbReference>
<dbReference type="EnsemblPlants" id="AT1G25220.1">
    <molecule id="Q42565-1"/>
    <property type="protein sequence ID" value="AT1G25220.1"/>
    <property type="gene ID" value="AT1G25220"/>
</dbReference>
<dbReference type="GeneID" id="839103"/>
<dbReference type="Gramene" id="AT1G25220.1">
    <molecule id="Q42565-1"/>
    <property type="protein sequence ID" value="AT1G25220.1"/>
    <property type="gene ID" value="AT1G25220"/>
</dbReference>
<dbReference type="KEGG" id="ath:AT1G25220"/>
<dbReference type="Araport" id="AT1G25220"/>
<dbReference type="TAIR" id="AT1G25220">
    <property type="gene designation" value="ASB1"/>
</dbReference>
<dbReference type="eggNOG" id="KOG0026">
    <property type="taxonomic scope" value="Eukaryota"/>
</dbReference>
<dbReference type="HOGENOM" id="CLU_014340_1_3_1"/>
<dbReference type="InParanoid" id="Q42565"/>
<dbReference type="OMA" id="HDNEAMF"/>
<dbReference type="PhylomeDB" id="Q42565"/>
<dbReference type="SABIO-RK" id="Q42565"/>
<dbReference type="UniPathway" id="UPA00035">
    <property type="reaction ID" value="UER00040"/>
</dbReference>
<dbReference type="PRO" id="PR:Q42565"/>
<dbReference type="Proteomes" id="UP000006548">
    <property type="component" value="Chromosome 1"/>
</dbReference>
<dbReference type="ExpressionAtlas" id="Q42565">
    <property type="expression patterns" value="baseline and differential"/>
</dbReference>
<dbReference type="GO" id="GO:0009507">
    <property type="term" value="C:chloroplast"/>
    <property type="evidence" value="ECO:0007669"/>
    <property type="project" value="UniProtKB-SubCell"/>
</dbReference>
<dbReference type="GO" id="GO:0004049">
    <property type="term" value="F:anthranilate synthase activity"/>
    <property type="evidence" value="ECO:0007669"/>
    <property type="project" value="UniProtKB-EC"/>
</dbReference>
<dbReference type="GO" id="GO:0000162">
    <property type="term" value="P:L-tryptophan biosynthetic process"/>
    <property type="evidence" value="ECO:0000315"/>
    <property type="project" value="UniProtKB"/>
</dbReference>
<dbReference type="GO" id="GO:0010600">
    <property type="term" value="P:regulation of auxin biosynthetic process"/>
    <property type="evidence" value="ECO:0000315"/>
    <property type="project" value="UniProtKB"/>
</dbReference>
<dbReference type="CDD" id="cd01743">
    <property type="entry name" value="GATase1_Anthranilate_Synthase"/>
    <property type="match status" value="1"/>
</dbReference>
<dbReference type="FunFam" id="3.40.50.880:FF:000027">
    <property type="entry name" value="Anthranilate synthase beta subunit 1"/>
    <property type="match status" value="1"/>
</dbReference>
<dbReference type="Gene3D" id="3.40.50.880">
    <property type="match status" value="1"/>
</dbReference>
<dbReference type="InterPro" id="IPR050472">
    <property type="entry name" value="Anth_synth/Amidotransfase"/>
</dbReference>
<dbReference type="InterPro" id="IPR029062">
    <property type="entry name" value="Class_I_gatase-like"/>
</dbReference>
<dbReference type="InterPro" id="IPR017926">
    <property type="entry name" value="GATASE"/>
</dbReference>
<dbReference type="InterPro" id="IPR006221">
    <property type="entry name" value="TrpG/PapA_dom"/>
</dbReference>
<dbReference type="NCBIfam" id="TIGR00566">
    <property type="entry name" value="trpG_papA"/>
    <property type="match status" value="1"/>
</dbReference>
<dbReference type="PANTHER" id="PTHR43418:SF4">
    <property type="entry name" value="MULTIFUNCTIONAL TRYPTOPHAN BIOSYNTHESIS PROTEIN"/>
    <property type="match status" value="1"/>
</dbReference>
<dbReference type="PANTHER" id="PTHR43418">
    <property type="entry name" value="MULTIFUNCTIONAL TRYPTOPHAN BIOSYNTHESIS PROTEIN-RELATED"/>
    <property type="match status" value="1"/>
</dbReference>
<dbReference type="Pfam" id="PF00117">
    <property type="entry name" value="GATase"/>
    <property type="match status" value="1"/>
</dbReference>
<dbReference type="PRINTS" id="PR00097">
    <property type="entry name" value="ANTSNTHASEII"/>
</dbReference>
<dbReference type="PRINTS" id="PR00099">
    <property type="entry name" value="CPSGATASE"/>
</dbReference>
<dbReference type="PRINTS" id="PR00096">
    <property type="entry name" value="GATASE"/>
</dbReference>
<dbReference type="SUPFAM" id="SSF52317">
    <property type="entry name" value="Class I glutamine amidotransferase-like"/>
    <property type="match status" value="1"/>
</dbReference>
<dbReference type="PROSITE" id="PS51273">
    <property type="entry name" value="GATASE_TYPE_1"/>
    <property type="match status" value="1"/>
</dbReference>
<name>ASB1_ARATH</name>
<evidence type="ECO:0000250" key="1"/>
<evidence type="ECO:0000255" key="2"/>
<evidence type="ECO:0000255" key="3">
    <source>
        <dbReference type="PROSITE-ProRule" id="PRU00605"/>
    </source>
</evidence>
<evidence type="ECO:0000269" key="4">
    <source>
    </source>
</evidence>
<evidence type="ECO:0000269" key="5">
    <source>
    </source>
</evidence>
<evidence type="ECO:0000269" key="6">
    <source>
    </source>
</evidence>
<evidence type="ECO:0000305" key="7"/>
<feature type="transit peptide" description="Chloroplast" evidence="2">
    <location>
        <begin position="1"/>
        <end position="50"/>
    </location>
</feature>
<feature type="chain" id="PRO_0000425665" description="Anthranilate synthase beta subunit 1, chloroplastic">
    <location>
        <begin position="51"/>
        <end position="276"/>
    </location>
</feature>
<feature type="domain" description="Glutamine amidotransferase type-1" evidence="3">
    <location>
        <begin position="74"/>
        <end position="273"/>
    </location>
</feature>
<feature type="active site" description="Nucleophile" evidence="3">
    <location>
        <position position="152"/>
    </location>
</feature>
<feature type="active site" evidence="3">
    <location>
        <position position="247"/>
    </location>
</feature>
<feature type="active site" evidence="3">
    <location>
        <position position="249"/>
    </location>
</feature>
<feature type="mutagenesis site" description="In trp4-1; no visible phenotype under normal growth conditions." evidence="6">
    <original>G</original>
    <variation>D</variation>
    <location>
        <position position="150"/>
    </location>
</feature>
<feature type="mutagenesis site" description="In wei7-2; insensitive to inhibition of root elongation by ethylene." evidence="4">
    <original>G</original>
    <variation>E</variation>
    <location>
        <position position="176"/>
    </location>
</feature>
<organism>
    <name type="scientific">Arabidopsis thaliana</name>
    <name type="common">Mouse-ear cress</name>
    <dbReference type="NCBI Taxonomy" id="3702"/>
    <lineage>
        <taxon>Eukaryota</taxon>
        <taxon>Viridiplantae</taxon>
        <taxon>Streptophyta</taxon>
        <taxon>Embryophyta</taxon>
        <taxon>Tracheophyta</taxon>
        <taxon>Spermatophyta</taxon>
        <taxon>Magnoliopsida</taxon>
        <taxon>eudicotyledons</taxon>
        <taxon>Gunneridae</taxon>
        <taxon>Pentapetalae</taxon>
        <taxon>rosids</taxon>
        <taxon>malvids</taxon>
        <taxon>Brassicales</taxon>
        <taxon>Brassicaceae</taxon>
        <taxon>Camelineae</taxon>
        <taxon>Arabidopsis</taxon>
    </lineage>
</organism>
<accession>Q42565</accession>
<gene>
    <name type="primary">ASB1</name>
    <name type="synonym">TRP4</name>
    <name type="synonym">WEI7</name>
    <name type="ordered locus">At1g25220</name>
    <name type="ORF">F4F7.39</name>
</gene>
<keyword id="KW-0025">Alternative splicing</keyword>
<keyword id="KW-0028">Amino-acid biosynthesis</keyword>
<keyword id="KW-0057">Aromatic amino acid biosynthesis</keyword>
<keyword id="KW-0150">Chloroplast</keyword>
<keyword id="KW-0315">Glutamine amidotransferase</keyword>
<keyword id="KW-0456">Lyase</keyword>
<keyword id="KW-0934">Plastid</keyword>
<keyword id="KW-1185">Reference proteome</keyword>
<keyword id="KW-0809">Transit peptide</keyword>
<keyword id="KW-0822">Tryptophan biosynthesis</keyword>
<reference key="1">
    <citation type="journal article" date="1993" name="Plant Cell">
        <title>Suppressors of trp1 fluorescence identify a new arabidopsis gene, TRP4, encoding the anthranilate synthase beta subunit.</title>
        <authorList>
            <person name="Niyogi K.K."/>
            <person name="Last R.L."/>
            <person name="Fink G.R."/>
            <person name="Keith B."/>
        </authorList>
    </citation>
    <scope>NUCLEOTIDE SEQUENCE [MRNA]</scope>
    <scope>INDUCTION</scope>
    <scope>MUTAGENESIS OF GLY-150</scope>
    <scope>DISRUPTION PHENOTYPE</scope>
    <source>
        <strain>cv. Columbia</strain>
    </source>
</reference>
<reference key="2">
    <citation type="journal article" date="2000" name="Nature">
        <title>Sequence and analysis of chromosome 1 of the plant Arabidopsis thaliana.</title>
        <authorList>
            <person name="Theologis A."/>
            <person name="Ecker J.R."/>
            <person name="Palm C.J."/>
            <person name="Federspiel N.A."/>
            <person name="Kaul S."/>
            <person name="White O."/>
            <person name="Alonso J."/>
            <person name="Altafi H."/>
            <person name="Araujo R."/>
            <person name="Bowman C.L."/>
            <person name="Brooks S.Y."/>
            <person name="Buehler E."/>
            <person name="Chan A."/>
            <person name="Chao Q."/>
            <person name="Chen H."/>
            <person name="Cheuk R.F."/>
            <person name="Chin C.W."/>
            <person name="Chung M.K."/>
            <person name="Conn L."/>
            <person name="Conway A.B."/>
            <person name="Conway A.R."/>
            <person name="Creasy T.H."/>
            <person name="Dewar K."/>
            <person name="Dunn P."/>
            <person name="Etgu P."/>
            <person name="Feldblyum T.V."/>
            <person name="Feng J.-D."/>
            <person name="Fong B."/>
            <person name="Fujii C.Y."/>
            <person name="Gill J.E."/>
            <person name="Goldsmith A.D."/>
            <person name="Haas B."/>
            <person name="Hansen N.F."/>
            <person name="Hughes B."/>
            <person name="Huizar L."/>
            <person name="Hunter J.L."/>
            <person name="Jenkins J."/>
            <person name="Johnson-Hopson C."/>
            <person name="Khan S."/>
            <person name="Khaykin E."/>
            <person name="Kim C.J."/>
            <person name="Koo H.L."/>
            <person name="Kremenetskaia I."/>
            <person name="Kurtz D.B."/>
            <person name="Kwan A."/>
            <person name="Lam B."/>
            <person name="Langin-Hooper S."/>
            <person name="Lee A."/>
            <person name="Lee J.M."/>
            <person name="Lenz C.A."/>
            <person name="Li J.H."/>
            <person name="Li Y.-P."/>
            <person name="Lin X."/>
            <person name="Liu S.X."/>
            <person name="Liu Z.A."/>
            <person name="Luros J.S."/>
            <person name="Maiti R."/>
            <person name="Marziali A."/>
            <person name="Militscher J."/>
            <person name="Miranda M."/>
            <person name="Nguyen M."/>
            <person name="Nierman W.C."/>
            <person name="Osborne B.I."/>
            <person name="Pai G."/>
            <person name="Peterson J."/>
            <person name="Pham P.K."/>
            <person name="Rizzo M."/>
            <person name="Rooney T."/>
            <person name="Rowley D."/>
            <person name="Sakano H."/>
            <person name="Salzberg S.L."/>
            <person name="Schwartz J.R."/>
            <person name="Shinn P."/>
            <person name="Southwick A.M."/>
            <person name="Sun H."/>
            <person name="Tallon L.J."/>
            <person name="Tambunga G."/>
            <person name="Toriumi M.J."/>
            <person name="Town C.D."/>
            <person name="Utterback T."/>
            <person name="Van Aken S."/>
            <person name="Vaysberg M."/>
            <person name="Vysotskaia V.S."/>
            <person name="Walker M."/>
            <person name="Wu D."/>
            <person name="Yu G."/>
            <person name="Fraser C.M."/>
            <person name="Venter J.C."/>
            <person name="Davis R.W."/>
        </authorList>
    </citation>
    <scope>NUCLEOTIDE SEQUENCE [LARGE SCALE GENOMIC DNA]</scope>
    <source>
        <strain>cv. Columbia</strain>
    </source>
</reference>
<reference key="3">
    <citation type="journal article" date="2017" name="Plant J.">
        <title>Araport11: a complete reannotation of the Arabidopsis thaliana reference genome.</title>
        <authorList>
            <person name="Cheng C.Y."/>
            <person name="Krishnakumar V."/>
            <person name="Chan A.P."/>
            <person name="Thibaud-Nissen F."/>
            <person name="Schobel S."/>
            <person name="Town C.D."/>
        </authorList>
    </citation>
    <scope>GENOME REANNOTATION</scope>
    <source>
        <strain>cv. Columbia</strain>
    </source>
</reference>
<reference key="4">
    <citation type="journal article" date="2003" name="Science">
        <title>Empirical analysis of transcriptional activity in the Arabidopsis genome.</title>
        <authorList>
            <person name="Yamada K."/>
            <person name="Lim J."/>
            <person name="Dale J.M."/>
            <person name="Chen H."/>
            <person name="Shinn P."/>
            <person name="Palm C.J."/>
            <person name="Southwick A.M."/>
            <person name="Wu H.C."/>
            <person name="Kim C.J."/>
            <person name="Nguyen M."/>
            <person name="Pham P.K."/>
            <person name="Cheuk R.F."/>
            <person name="Karlin-Newmann G."/>
            <person name="Liu S.X."/>
            <person name="Lam B."/>
            <person name="Sakano H."/>
            <person name="Wu T."/>
            <person name="Yu G."/>
            <person name="Miranda M."/>
            <person name="Quach H.L."/>
            <person name="Tripp M."/>
            <person name="Chang C.H."/>
            <person name="Lee J.M."/>
            <person name="Toriumi M.J."/>
            <person name="Chan M.M."/>
            <person name="Tang C.C."/>
            <person name="Onodera C.S."/>
            <person name="Deng J.M."/>
            <person name="Akiyama K."/>
            <person name="Ansari Y."/>
            <person name="Arakawa T."/>
            <person name="Banh J."/>
            <person name="Banno F."/>
            <person name="Bowser L."/>
            <person name="Brooks S.Y."/>
            <person name="Carninci P."/>
            <person name="Chao Q."/>
            <person name="Choy N."/>
            <person name="Enju A."/>
            <person name="Goldsmith A.D."/>
            <person name="Gurjal M."/>
            <person name="Hansen N.F."/>
            <person name="Hayashizaki Y."/>
            <person name="Johnson-Hopson C."/>
            <person name="Hsuan V.W."/>
            <person name="Iida K."/>
            <person name="Karnes M."/>
            <person name="Khan S."/>
            <person name="Koesema E."/>
            <person name="Ishida J."/>
            <person name="Jiang P.X."/>
            <person name="Jones T."/>
            <person name="Kawai J."/>
            <person name="Kamiya A."/>
            <person name="Meyers C."/>
            <person name="Nakajima M."/>
            <person name="Narusaka M."/>
            <person name="Seki M."/>
            <person name="Sakurai T."/>
            <person name="Satou M."/>
            <person name="Tamse R."/>
            <person name="Vaysberg M."/>
            <person name="Wallender E.K."/>
            <person name="Wong C."/>
            <person name="Yamamura Y."/>
            <person name="Yuan S."/>
            <person name="Shinozaki K."/>
            <person name="Davis R.W."/>
            <person name="Theologis A."/>
            <person name="Ecker J.R."/>
        </authorList>
    </citation>
    <scope>NUCLEOTIDE SEQUENCE [LARGE SCALE MRNA]</scope>
    <source>
        <strain>cv. Columbia</strain>
    </source>
</reference>
<reference key="5">
    <citation type="submission" date="2006-07" db="EMBL/GenBank/DDBJ databases">
        <title>Large-scale analysis of RIKEN Arabidopsis full-length (RAFL) cDNAs.</title>
        <authorList>
            <person name="Totoki Y."/>
            <person name="Seki M."/>
            <person name="Ishida J."/>
            <person name="Nakajima M."/>
            <person name="Enju A."/>
            <person name="Kamiya A."/>
            <person name="Narusaka M."/>
            <person name="Shin-i T."/>
            <person name="Nakagawa M."/>
            <person name="Sakamoto N."/>
            <person name="Oishi K."/>
            <person name="Kohara Y."/>
            <person name="Kobayashi M."/>
            <person name="Toyoda A."/>
            <person name="Sakaki Y."/>
            <person name="Sakurai T."/>
            <person name="Iida K."/>
            <person name="Akiyama K."/>
            <person name="Satou M."/>
            <person name="Toyoda T."/>
            <person name="Konagaya A."/>
            <person name="Carninci P."/>
            <person name="Kawai J."/>
            <person name="Hayashizaki Y."/>
            <person name="Shinozaki K."/>
        </authorList>
    </citation>
    <scope>NUCLEOTIDE SEQUENCE [LARGE SCALE MRNA]</scope>
    <source>
        <strain>cv. Columbia</strain>
    </source>
</reference>
<reference key="6">
    <citation type="journal article" date="2005" name="Plant Cell">
        <title>A link between ethylene and auxin uncovered by the characterization of two root-specific ethylene-insensitive mutants in Arabidopsis.</title>
        <authorList>
            <person name="Stepanova A.N."/>
            <person name="Hoyt J.M."/>
            <person name="Hamilton A.A."/>
            <person name="Alonso J.M."/>
        </authorList>
    </citation>
    <scope>FUNCTION</scope>
    <scope>INDUCTION BY ETHYLENE</scope>
    <scope>DISRUPTION PHENOTYPE</scope>
    <scope>MUTAGENESIS OF GLY-176</scope>
</reference>
<reference key="7">
    <citation type="journal article" date="2008" name="Plant J.">
        <title>Ethylene-auxin interactions regulate lateral root initiation and emergence in Arabidopsis thaliana.</title>
        <authorList>
            <person name="Ivanchenko M.G."/>
            <person name="Muday G.K."/>
            <person name="Dubrovsky J.G."/>
        </authorList>
    </citation>
    <scope>TISSUE SPECIFICITY</scope>
</reference>